<feature type="chain" id="PRO_1000132541" description="Imidazole glycerol phosphate synthase subunit HisH">
    <location>
        <begin position="1"/>
        <end position="208"/>
    </location>
</feature>
<feature type="domain" description="Glutamine amidotransferase type-1" evidence="1">
    <location>
        <begin position="1"/>
        <end position="206"/>
    </location>
</feature>
<feature type="active site" description="Nucleophile" evidence="1">
    <location>
        <position position="79"/>
    </location>
</feature>
<feature type="active site" evidence="1">
    <location>
        <position position="181"/>
    </location>
</feature>
<feature type="active site" evidence="1">
    <location>
        <position position="183"/>
    </location>
</feature>
<accession>B8DA60</accession>
<dbReference type="EC" id="4.3.2.10" evidence="1"/>
<dbReference type="EC" id="3.5.1.2" evidence="1"/>
<dbReference type="EMBL" id="CP001175">
    <property type="protein sequence ID" value="ACK40405.1"/>
    <property type="molecule type" value="Genomic_DNA"/>
</dbReference>
<dbReference type="RefSeq" id="WP_012581848.1">
    <property type="nucleotide sequence ID" value="NC_011660.1"/>
</dbReference>
<dbReference type="SMR" id="B8DA60"/>
<dbReference type="KEGG" id="lmh:LMHCC_2066"/>
<dbReference type="HOGENOM" id="CLU_071837_2_2_9"/>
<dbReference type="UniPathway" id="UPA00031">
    <property type="reaction ID" value="UER00010"/>
</dbReference>
<dbReference type="GO" id="GO:0005737">
    <property type="term" value="C:cytoplasm"/>
    <property type="evidence" value="ECO:0007669"/>
    <property type="project" value="UniProtKB-SubCell"/>
</dbReference>
<dbReference type="GO" id="GO:0004359">
    <property type="term" value="F:glutaminase activity"/>
    <property type="evidence" value="ECO:0007669"/>
    <property type="project" value="UniProtKB-EC"/>
</dbReference>
<dbReference type="GO" id="GO:0000107">
    <property type="term" value="F:imidazoleglycerol-phosphate synthase activity"/>
    <property type="evidence" value="ECO:0007669"/>
    <property type="project" value="UniProtKB-UniRule"/>
</dbReference>
<dbReference type="GO" id="GO:0016829">
    <property type="term" value="F:lyase activity"/>
    <property type="evidence" value="ECO:0007669"/>
    <property type="project" value="UniProtKB-KW"/>
</dbReference>
<dbReference type="GO" id="GO:0000105">
    <property type="term" value="P:L-histidine biosynthetic process"/>
    <property type="evidence" value="ECO:0007669"/>
    <property type="project" value="UniProtKB-UniRule"/>
</dbReference>
<dbReference type="CDD" id="cd01748">
    <property type="entry name" value="GATase1_IGP_Synthase"/>
    <property type="match status" value="1"/>
</dbReference>
<dbReference type="FunFam" id="3.40.50.880:FF:000028">
    <property type="entry name" value="Imidazole glycerol phosphate synthase subunit HisH"/>
    <property type="match status" value="1"/>
</dbReference>
<dbReference type="Gene3D" id="3.40.50.880">
    <property type="match status" value="1"/>
</dbReference>
<dbReference type="HAMAP" id="MF_00278">
    <property type="entry name" value="HisH"/>
    <property type="match status" value="1"/>
</dbReference>
<dbReference type="InterPro" id="IPR029062">
    <property type="entry name" value="Class_I_gatase-like"/>
</dbReference>
<dbReference type="InterPro" id="IPR017926">
    <property type="entry name" value="GATASE"/>
</dbReference>
<dbReference type="InterPro" id="IPR010139">
    <property type="entry name" value="Imidazole-glycPsynth_HisH"/>
</dbReference>
<dbReference type="NCBIfam" id="TIGR01855">
    <property type="entry name" value="IMP_synth_hisH"/>
    <property type="match status" value="1"/>
</dbReference>
<dbReference type="PANTHER" id="PTHR42701">
    <property type="entry name" value="IMIDAZOLE GLYCEROL PHOSPHATE SYNTHASE SUBUNIT HISH"/>
    <property type="match status" value="1"/>
</dbReference>
<dbReference type="PANTHER" id="PTHR42701:SF1">
    <property type="entry name" value="IMIDAZOLE GLYCEROL PHOSPHATE SYNTHASE SUBUNIT HISH"/>
    <property type="match status" value="1"/>
</dbReference>
<dbReference type="Pfam" id="PF00117">
    <property type="entry name" value="GATase"/>
    <property type="match status" value="1"/>
</dbReference>
<dbReference type="PIRSF" id="PIRSF000495">
    <property type="entry name" value="Amidotransf_hisH"/>
    <property type="match status" value="1"/>
</dbReference>
<dbReference type="SUPFAM" id="SSF52317">
    <property type="entry name" value="Class I glutamine amidotransferase-like"/>
    <property type="match status" value="1"/>
</dbReference>
<dbReference type="PROSITE" id="PS51273">
    <property type="entry name" value="GATASE_TYPE_1"/>
    <property type="match status" value="1"/>
</dbReference>
<evidence type="ECO:0000255" key="1">
    <source>
        <dbReference type="HAMAP-Rule" id="MF_00278"/>
    </source>
</evidence>
<sequence length="208" mass="22760">MIVIIDYDTGNTKSISKALDFIGLQNKISSDATEISQADGVILPGVGAYPEAMKELTRRGLDKTLKEIAATGKPILGVCLGMQLLLESSNEHSFTSGLGLIPGHVEKLPEEPEFAVPHMGWNQLQIKRATPLTKQLDGEYVYYVHSYYANCPEEYIIATSGYSIEVPGMINNGNIYGAQFHPEKSGQIGLEILKGFKEVTYSCKSSQQ</sequence>
<keyword id="KW-0028">Amino-acid biosynthesis</keyword>
<keyword id="KW-0963">Cytoplasm</keyword>
<keyword id="KW-0315">Glutamine amidotransferase</keyword>
<keyword id="KW-0368">Histidine biosynthesis</keyword>
<keyword id="KW-0378">Hydrolase</keyword>
<keyword id="KW-0456">Lyase</keyword>
<comment type="function">
    <text evidence="1">IGPS catalyzes the conversion of PRFAR and glutamine to IGP, AICAR and glutamate. The HisH subunit catalyzes the hydrolysis of glutamine to glutamate and ammonia as part of the synthesis of IGP and AICAR. The resulting ammonia molecule is channeled to the active site of HisF.</text>
</comment>
<comment type="catalytic activity">
    <reaction evidence="1">
        <text>5-[(5-phospho-1-deoxy-D-ribulos-1-ylimino)methylamino]-1-(5-phospho-beta-D-ribosyl)imidazole-4-carboxamide + L-glutamine = D-erythro-1-(imidazol-4-yl)glycerol 3-phosphate + 5-amino-1-(5-phospho-beta-D-ribosyl)imidazole-4-carboxamide + L-glutamate + H(+)</text>
        <dbReference type="Rhea" id="RHEA:24793"/>
        <dbReference type="ChEBI" id="CHEBI:15378"/>
        <dbReference type="ChEBI" id="CHEBI:29985"/>
        <dbReference type="ChEBI" id="CHEBI:58278"/>
        <dbReference type="ChEBI" id="CHEBI:58359"/>
        <dbReference type="ChEBI" id="CHEBI:58475"/>
        <dbReference type="ChEBI" id="CHEBI:58525"/>
        <dbReference type="EC" id="4.3.2.10"/>
    </reaction>
</comment>
<comment type="catalytic activity">
    <reaction evidence="1">
        <text>L-glutamine + H2O = L-glutamate + NH4(+)</text>
        <dbReference type="Rhea" id="RHEA:15889"/>
        <dbReference type="ChEBI" id="CHEBI:15377"/>
        <dbReference type="ChEBI" id="CHEBI:28938"/>
        <dbReference type="ChEBI" id="CHEBI:29985"/>
        <dbReference type="ChEBI" id="CHEBI:58359"/>
        <dbReference type="EC" id="3.5.1.2"/>
    </reaction>
</comment>
<comment type="pathway">
    <text evidence="1">Amino-acid biosynthesis; L-histidine biosynthesis; L-histidine from 5-phospho-alpha-D-ribose 1-diphosphate: step 5/9.</text>
</comment>
<comment type="subunit">
    <text evidence="1">Heterodimer of HisH and HisF.</text>
</comment>
<comment type="subcellular location">
    <subcellularLocation>
        <location evidence="1">Cytoplasm</location>
    </subcellularLocation>
</comment>
<organism>
    <name type="scientific">Listeria monocytogenes serotype 4a (strain HCC23)</name>
    <dbReference type="NCBI Taxonomy" id="552536"/>
    <lineage>
        <taxon>Bacteria</taxon>
        <taxon>Bacillati</taxon>
        <taxon>Bacillota</taxon>
        <taxon>Bacilli</taxon>
        <taxon>Bacillales</taxon>
        <taxon>Listeriaceae</taxon>
        <taxon>Listeria</taxon>
    </lineage>
</organism>
<reference key="1">
    <citation type="journal article" date="2011" name="J. Bacteriol.">
        <title>Genome sequence of lineage III Listeria monocytogenes strain HCC23.</title>
        <authorList>
            <person name="Steele C.L."/>
            <person name="Donaldson J.R."/>
            <person name="Paul D."/>
            <person name="Banes M.M."/>
            <person name="Arick T."/>
            <person name="Bridges S.M."/>
            <person name="Lawrence M.L."/>
        </authorList>
    </citation>
    <scope>NUCLEOTIDE SEQUENCE [LARGE SCALE GENOMIC DNA]</scope>
    <source>
        <strain>HCC23</strain>
    </source>
</reference>
<gene>
    <name evidence="1" type="primary">hisH</name>
    <name type="ordered locus">LMHCC_2066</name>
</gene>
<name>HIS5_LISMH</name>
<proteinExistence type="inferred from homology"/>
<protein>
    <recommendedName>
        <fullName evidence="1">Imidazole glycerol phosphate synthase subunit HisH</fullName>
        <ecNumber evidence="1">4.3.2.10</ecNumber>
    </recommendedName>
    <alternativeName>
        <fullName evidence="1">IGP synthase glutaminase subunit</fullName>
        <ecNumber evidence="1">3.5.1.2</ecNumber>
    </alternativeName>
    <alternativeName>
        <fullName evidence="1">IGP synthase subunit HisH</fullName>
    </alternativeName>
    <alternativeName>
        <fullName evidence="1">ImGP synthase subunit HisH</fullName>
        <shortName evidence="1">IGPS subunit HisH</shortName>
    </alternativeName>
</protein>